<reference key="1">
    <citation type="journal article" date="1994" name="Plant Mol. Biol.">
        <title>Nucleotide sequence analysis of a cDNA clone encoding the 34K movement protein gene of odontoglossum ringspot virus, ORSV-Cy, the Korean isolate.</title>
        <authorList>
            <person name="Ryu K.H."/>
            <person name="Park W.M."/>
        </authorList>
    </citation>
    <scope>NUCLEOTIDE SEQUENCE [GENOMIC RNA]</scope>
</reference>
<reference key="2">
    <citation type="journal article" date="1995" name="Arch. Virol.">
        <title>Cloning of the 3'-terminal region encoding movement and coat proteins of a Korean isolate of odontoglossum ringspot virus.</title>
        <authorList>
            <person name="Ryu K.H."/>
            <person name="Choi C.W."/>
            <person name="Choi J.K."/>
            <person name="Park W.M."/>
        </authorList>
    </citation>
    <scope>NUCLEOTIDE SEQUENCE [GENOMIC RNA]</scope>
</reference>
<reference key="3">
    <citation type="journal article" date="1995" name="Arch. Virol.">
        <title>The complete nucleotide sequence and genome organization of odontoglossum ringspot tobamovirus RNA.</title>
        <authorList>
            <person name="Ryu K.H."/>
            <person name="Park W.M."/>
        </authorList>
    </citation>
    <scope>NUCLEOTIDE SEQUENCE [GENOMIC RNA]</scope>
</reference>
<reference key="4">
    <citation type="journal article" date="1995" name="Microbiol. Immunol.">
        <title>The complete nucleotide sequence of odontoglossum ringspot virus (Cy-1 strain) genomic RNA.</title>
        <authorList>
            <person name="Ikegami M."/>
            <person name="Isomura Y."/>
            <person name="Matsumoto Y."/>
            <person name="Chatani M."/>
            <person name="Inouye N."/>
        </authorList>
    </citation>
    <scope>NUCLEOTIDE SEQUENCE [GENOMIC RNA] OF 26-303</scope>
</reference>
<evidence type="ECO:0000250" key="1">
    <source>
        <dbReference type="UniProtKB" id="P03583"/>
    </source>
</evidence>
<evidence type="ECO:0000250" key="2">
    <source>
        <dbReference type="UniProtKB" id="P69513"/>
    </source>
</evidence>
<evidence type="ECO:0000305" key="3"/>
<protein>
    <recommendedName>
        <fullName>Movement protein</fullName>
    </recommendedName>
    <alternativeName>
        <fullName>33.4 kDa protein</fullName>
    </alternativeName>
    <alternativeName>
        <fullName>Cell-to-cell transport protein</fullName>
    </alternativeName>
</protein>
<name>MVP_ORSVC</name>
<sequence>MGRLRFVVLLSIFPIKTFSEPCYTMALVLRDSIKISEFINLSAFEKLLPSALTAVKSVRIPKVDKIISYENDTLSDIDLLKGVKLVENGYVCLAGLVVTGEWNLPDNCKGGVSICLVDKRMKRANEATLGSYHTSACKKRFTFKIIPNYSVTTADALKGIWQVMTNIRGVEMEKGFCPLSLEFVSICVVYLNNIKLGLREKILNVTEGGPTELTEAVVDRFVEKVPMAARLKSFRSVNKKKPSNSSKFVNGKSRLNSRNKLNYENGDSDVGTSVVDDIVVGNGVSDIRIDDDCESFDAQSESY</sequence>
<accession>Q84123</accession>
<accession>P90441</accession>
<accession>Q84127</accession>
<gene>
    <name type="primary">MP</name>
</gene>
<feature type="chain" id="PRO_0000144959" description="Movement protein">
    <location>
        <begin position="1"/>
        <end position="303"/>
    </location>
</feature>
<feature type="sequence conflict" description="In Ref. 4; AAB49500." evidence="3" ref="4">
    <original>F</original>
    <variation>S</variation>
    <location>
        <position position="44"/>
    </location>
</feature>
<feature type="sequence conflict" description="In Ref. 4; AAB49500." evidence="3" ref="4">
    <original>P</original>
    <variation>S</variation>
    <location>
        <position position="61"/>
    </location>
</feature>
<feature type="sequence conflict" description="In Ref. 4; AAB49500." evidence="3" ref="4">
    <original>R</original>
    <variation>E</variation>
    <location>
        <position position="220"/>
    </location>
</feature>
<feature type="sequence conflict" description="In Ref. 4; AAB49500." evidence="3" ref="4">
    <original>T</original>
    <variation>I</variation>
    <location>
        <position position="272"/>
    </location>
</feature>
<feature type="sequence conflict" description="In Ref. 4; AAB49500." evidence="3" ref="4">
    <original>E</original>
    <variation>D</variation>
    <location>
        <position position="301"/>
    </location>
</feature>
<organism>
    <name type="scientific">Odontoglossum ringspot virus (isolate Korean Cy)</name>
    <name type="common">ORSV-Cy</name>
    <dbReference type="NCBI Taxonomy" id="138661"/>
    <lineage>
        <taxon>Viruses</taxon>
        <taxon>Riboviria</taxon>
        <taxon>Orthornavirae</taxon>
        <taxon>Kitrinoviricota</taxon>
        <taxon>Alsuviricetes</taxon>
        <taxon>Martellivirales</taxon>
        <taxon>Virgaviridae</taxon>
        <taxon>Tobamovirus</taxon>
        <taxon>Odontoglossum ringspot virus</taxon>
    </lineage>
</organism>
<proteinExistence type="inferred from homology"/>
<keyword id="KW-1031">Host cell junction</keyword>
<keyword id="KW-1035">Host cytoplasm</keyword>
<keyword id="KW-1037">Host cytoskeleton</keyword>
<keyword id="KW-0694">RNA-binding</keyword>
<keyword id="KW-0813">Transport</keyword>
<keyword id="KW-0916">Viral movement protein</keyword>
<dbReference type="EMBL" id="X80053">
    <property type="protein sequence ID" value="CAA56356.1"/>
    <property type="molecule type" value="Genomic_RNA"/>
</dbReference>
<dbReference type="EMBL" id="X82130">
    <property type="protein sequence ID" value="CAA57644.1"/>
    <property type="molecule type" value="Genomic_RNA"/>
</dbReference>
<dbReference type="EMBL" id="S83257">
    <property type="protein sequence ID" value="AAB49500.1"/>
    <property type="molecule type" value="Genomic_RNA"/>
</dbReference>
<dbReference type="PIR" id="S50749">
    <property type="entry name" value="S50749"/>
</dbReference>
<dbReference type="RefSeq" id="NP_056811.1">
    <property type="nucleotide sequence ID" value="NC_001728.1"/>
</dbReference>
<dbReference type="KEGG" id="vg:1494069"/>
<dbReference type="Proteomes" id="UP000007788">
    <property type="component" value="Genome"/>
</dbReference>
<dbReference type="Proteomes" id="UP000202780">
    <property type="component" value="Segment"/>
</dbReference>
<dbReference type="GO" id="GO:0030430">
    <property type="term" value="C:host cell cytoplasm"/>
    <property type="evidence" value="ECO:0007669"/>
    <property type="project" value="UniProtKB-KW"/>
</dbReference>
<dbReference type="GO" id="GO:0044219">
    <property type="term" value="C:host cell plasmodesma"/>
    <property type="evidence" value="ECO:0007669"/>
    <property type="project" value="UniProtKB-SubCell"/>
</dbReference>
<dbReference type="GO" id="GO:0044163">
    <property type="term" value="C:host cytoskeleton"/>
    <property type="evidence" value="ECO:0007669"/>
    <property type="project" value="UniProtKB-SubCell"/>
</dbReference>
<dbReference type="GO" id="GO:0003723">
    <property type="term" value="F:RNA binding"/>
    <property type="evidence" value="ECO:0007669"/>
    <property type="project" value="UniProtKB-KW"/>
</dbReference>
<dbReference type="GO" id="GO:0046740">
    <property type="term" value="P:transport of virus in host, cell to cell"/>
    <property type="evidence" value="ECO:0007669"/>
    <property type="project" value="UniProtKB-KW"/>
</dbReference>
<dbReference type="InterPro" id="IPR001022">
    <property type="entry name" value="TMV_movement"/>
</dbReference>
<dbReference type="InterPro" id="IPR028919">
    <property type="entry name" value="Viral_movement"/>
</dbReference>
<dbReference type="Pfam" id="PF01107">
    <property type="entry name" value="MP"/>
    <property type="match status" value="1"/>
</dbReference>
<dbReference type="PRINTS" id="PR00964">
    <property type="entry name" value="MOVEMENT"/>
</dbReference>
<organismHost>
    <name type="scientific">Cymbidium</name>
    <dbReference type="NCBI Taxonomy" id="14366"/>
</organismHost>
<organismHost>
    <name type="scientific">Odontoglossum</name>
    <dbReference type="NCBI Taxonomy" id="154697"/>
</organismHost>
<comment type="function">
    <text evidence="1 2">Transports viral genome to neighboring plant cells directly through plasmosdesmata, without any budding. The movement protein allows efficient cell to cell propagation, by bypassing the host cell wall barrier. Forms a ribonucleoprotein complex with viral RNA. Binds microtubules and modulates microtubule stability. Can bind double-stranded DNA.</text>
</comment>
<comment type="subcellular location">
    <subcellularLocation>
        <location evidence="2">Host cytoplasm</location>
        <location evidence="2">Host cytoskeleton</location>
    </subcellularLocation>
    <subcellularLocation>
        <location evidence="2">Host cell junction</location>
        <location evidence="2">Host plasmodesma</location>
    </subcellularLocation>
</comment>
<comment type="similarity">
    <text evidence="3">Belongs to the tobamovirus movement protein family.</text>
</comment>